<organism>
    <name type="scientific">Methanococcus aeolicus (strain ATCC BAA-1280 / DSM 17508 / OCM 812 / Nankai-3)</name>
    <dbReference type="NCBI Taxonomy" id="419665"/>
    <lineage>
        <taxon>Archaea</taxon>
        <taxon>Methanobacteriati</taxon>
        <taxon>Methanobacteriota</taxon>
        <taxon>Methanomada group</taxon>
        <taxon>Methanococci</taxon>
        <taxon>Methanococcales</taxon>
        <taxon>Methanococcaceae</taxon>
        <taxon>Methanococcus</taxon>
    </lineage>
</organism>
<reference key="1">
    <citation type="submission" date="2007-06" db="EMBL/GenBank/DDBJ databases">
        <title>Complete sequence of Methanococcus aeolicus Nankai-3.</title>
        <authorList>
            <consortium name="US DOE Joint Genome Institute"/>
            <person name="Copeland A."/>
            <person name="Lucas S."/>
            <person name="Lapidus A."/>
            <person name="Barry K."/>
            <person name="Glavina del Rio T."/>
            <person name="Dalin E."/>
            <person name="Tice H."/>
            <person name="Pitluck S."/>
            <person name="Chain P."/>
            <person name="Malfatti S."/>
            <person name="Shin M."/>
            <person name="Vergez L."/>
            <person name="Schmutz J."/>
            <person name="Larimer F."/>
            <person name="Land M."/>
            <person name="Hauser L."/>
            <person name="Kyrpides N."/>
            <person name="Lykidis A."/>
            <person name="Sieprawska-Lupa M."/>
            <person name="Whitman W.B."/>
            <person name="Richardson P."/>
        </authorList>
    </citation>
    <scope>NUCLEOTIDE SEQUENCE [LARGE SCALE GENOMIC DNA]</scope>
    <source>
        <strain>ATCC BAA-1280 / DSM 17508 / OCM 812 / Nankai-3</strain>
    </source>
</reference>
<proteinExistence type="inferred from homology"/>
<dbReference type="EC" id="3.5.1.102" evidence="2"/>
<dbReference type="EMBL" id="CP000743">
    <property type="protein sequence ID" value="ABR56247.1"/>
    <property type="molecule type" value="Genomic_DNA"/>
</dbReference>
<dbReference type="RefSeq" id="WP_011973379.1">
    <property type="nucleotide sequence ID" value="NC_009635.1"/>
</dbReference>
<dbReference type="SMR" id="A6UUS5"/>
<dbReference type="STRING" id="419665.Maeo_0663"/>
<dbReference type="GeneID" id="5327096"/>
<dbReference type="KEGG" id="mae:Maeo_0663"/>
<dbReference type="eggNOG" id="arCOG04536">
    <property type="taxonomic scope" value="Archaea"/>
</dbReference>
<dbReference type="HOGENOM" id="CLU_1192640_0_0_2"/>
<dbReference type="OrthoDB" id="46121at2157"/>
<dbReference type="UniPathway" id="UPA00071"/>
<dbReference type="UniPathway" id="UPA00275"/>
<dbReference type="Proteomes" id="UP000001106">
    <property type="component" value="Chromosome"/>
</dbReference>
<dbReference type="GO" id="GO:0043729">
    <property type="term" value="F:2-amino-5-formylamino-6-(5-phosphoribosylamino)pyrimidin-4(3H)-one formate-lyase activity"/>
    <property type="evidence" value="ECO:0007669"/>
    <property type="project" value="UniProtKB-EC"/>
</dbReference>
<dbReference type="GO" id="GO:0008198">
    <property type="term" value="F:ferrous iron binding"/>
    <property type="evidence" value="ECO:0007669"/>
    <property type="project" value="UniProtKB-UniRule"/>
</dbReference>
<dbReference type="GO" id="GO:0052645">
    <property type="term" value="P:F420-0 metabolic process"/>
    <property type="evidence" value="ECO:0007669"/>
    <property type="project" value="UniProtKB-UniRule"/>
</dbReference>
<dbReference type="GO" id="GO:0009231">
    <property type="term" value="P:riboflavin biosynthetic process"/>
    <property type="evidence" value="ECO:0007669"/>
    <property type="project" value="UniProtKB-UniRule"/>
</dbReference>
<dbReference type="Gene3D" id="3.40.50.10310">
    <property type="entry name" value="Creatininase"/>
    <property type="match status" value="1"/>
</dbReference>
<dbReference type="HAMAP" id="MF_02116">
    <property type="entry name" value="FAPy_deform"/>
    <property type="match status" value="1"/>
</dbReference>
<dbReference type="InterPro" id="IPR024087">
    <property type="entry name" value="Creatininase-like_sf"/>
</dbReference>
<dbReference type="InterPro" id="IPR003785">
    <property type="entry name" value="Creatininase/forma_Hydrolase"/>
</dbReference>
<dbReference type="InterPro" id="IPR024901">
    <property type="entry name" value="FAPy_deformylase"/>
</dbReference>
<dbReference type="NCBIfam" id="NF033501">
    <property type="entry name" value="ArfB_arch_rifla"/>
    <property type="match status" value="1"/>
</dbReference>
<dbReference type="PANTHER" id="PTHR35005:SF1">
    <property type="entry name" value="2-AMINO-5-FORMYLAMINO-6-RIBOSYLAMINOPYRIMIDIN-4(3H)-ONE 5'-MONOPHOSPHATE DEFORMYLASE"/>
    <property type="match status" value="1"/>
</dbReference>
<dbReference type="PANTHER" id="PTHR35005">
    <property type="entry name" value="3-DEHYDRO-SCYLLO-INOSOSE HYDROLASE"/>
    <property type="match status" value="1"/>
</dbReference>
<dbReference type="Pfam" id="PF02633">
    <property type="entry name" value="Creatininase"/>
    <property type="match status" value="1"/>
</dbReference>
<dbReference type="SUPFAM" id="SSF102215">
    <property type="entry name" value="Creatininase"/>
    <property type="match status" value="1"/>
</dbReference>
<evidence type="ECO:0000250" key="1"/>
<evidence type="ECO:0000255" key="2">
    <source>
        <dbReference type="HAMAP-Rule" id="MF_02116"/>
    </source>
</evidence>
<name>ARFB_META3</name>
<protein>
    <recommendedName>
        <fullName evidence="2">2-amino-5-formylamino-6-ribosylaminopyrimidin-4(3H)-one 5'-monophosphate deformylase</fullName>
        <shortName evidence="2">FAPy deformylase</shortName>
        <ecNumber evidence="2">3.5.1.102</ecNumber>
    </recommendedName>
    <alternativeName>
        <fullName evidence="2">Formamide hydrolase</fullName>
    </alternativeName>
</protein>
<comment type="function">
    <text evidence="2">Catalyzes the hydrolysis of the formamide of 2-amino-5-formylamino-6-ribosylamino-4(3H)-pyrimidinone 5'-monophosphate (FAPy) to form 2,5-diamino-6-ribosylamino-4(3H)-pyrimidinone 5'-phosphate (APy).</text>
</comment>
<comment type="catalytic activity">
    <reaction evidence="2">
        <text>2-amino-5-formylamino-6-(5-phospho-D-ribosylamino)pyrimidin-4(3H)-one + H2O = 2,5-diamino-6-(1-D-ribosylamino)pyrimidin-4(3H)-one 5'-phosphate + formate + H(+)</text>
        <dbReference type="Rhea" id="RHEA:27282"/>
        <dbReference type="ChEBI" id="CHEBI:15377"/>
        <dbReference type="ChEBI" id="CHEBI:15378"/>
        <dbReference type="ChEBI" id="CHEBI:15740"/>
        <dbReference type="ChEBI" id="CHEBI:57258"/>
        <dbReference type="ChEBI" id="CHEBI:59545"/>
        <dbReference type="EC" id="3.5.1.102"/>
    </reaction>
</comment>
<comment type="cofactor">
    <cofactor evidence="1">
        <name>Fe(2+)</name>
        <dbReference type="ChEBI" id="CHEBI:29033"/>
    </cofactor>
    <text evidence="1">Requires one Fe(2+) ion for activity.</text>
</comment>
<comment type="cofactor">
    <cofactor evidence="1">
        <name>Fe(2+)</name>
        <dbReference type="ChEBI" id="CHEBI:29033"/>
    </cofactor>
    <cofactor evidence="1">
        <name>Zn(2+)</name>
        <dbReference type="ChEBI" id="CHEBI:29105"/>
    </cofactor>
    <text evidence="1">Requires an additional second metal ion that could be Fe(2+) or Zn(2+).</text>
</comment>
<comment type="pathway">
    <text evidence="2">Cofactor biosynthesis; coenzyme F420 biosynthesis.</text>
</comment>
<comment type="pathway">
    <text evidence="2">Cofactor biosynthesis; riboflavin biosynthesis.</text>
</comment>
<comment type="subunit">
    <text evidence="2">Homodimer.</text>
</comment>
<comment type="similarity">
    <text evidence="2">Belongs to the creatininase superfamily. FAPy deformylase family.</text>
</comment>
<gene>
    <name evidence="2" type="primary">arfB</name>
    <name type="ordered locus">Maeo_0663</name>
</gene>
<keyword id="KW-0378">Hydrolase</keyword>
<keyword id="KW-0408">Iron</keyword>
<keyword id="KW-0479">Metal-binding</keyword>
<keyword id="KW-0862">Zinc</keyword>
<accession>A6UUS5</accession>
<sequence>MEKMENIKNNKINEIKDIENLRLTSGKIINKNVHQIGIIALGSYLENHGTVLPIDTDIKIASYIALNVAIQTGAKFLGCVLPSTEYEYVKHGIHNTPNEVVEYIDFLVEQGKKIGINKFLIINCHGGNTLINELIEELPYKSDIKLKIKNITSTHASTEELSVGYVIGIADKSKLKEHNPKDYPEIAMIGLTEARKNNKYIDNEAKIAEKKGITINEDLGNKILKNAINECILEVELLLNNK</sequence>
<feature type="chain" id="PRO_0000406924" description="2-amino-5-formylamino-6-ribosylaminopyrimidin-4(3H)-one 5'-monophosphate deformylase">
    <location>
        <begin position="1"/>
        <end position="242"/>
    </location>
</feature>
<feature type="binding site" evidence="2">
    <location>
        <position position="46"/>
    </location>
    <ligand>
        <name>Fe cation</name>
        <dbReference type="ChEBI" id="CHEBI:24875"/>
        <label>1</label>
    </ligand>
</feature>
<feature type="binding site" evidence="2">
    <location>
        <position position="48"/>
    </location>
    <ligand>
        <name>Fe cation</name>
        <dbReference type="ChEBI" id="CHEBI:24875"/>
        <label>2</label>
    </ligand>
</feature>
<feature type="binding site" evidence="2">
    <location>
        <position position="57"/>
    </location>
    <ligand>
        <name>Fe cation</name>
        <dbReference type="ChEBI" id="CHEBI:24875"/>
        <label>1</label>
    </ligand>
</feature>
<feature type="binding site" evidence="2">
    <location>
        <position position="57"/>
    </location>
    <ligand>
        <name>Fe cation</name>
        <dbReference type="ChEBI" id="CHEBI:24875"/>
        <label>2</label>
    </ligand>
</feature>
<feature type="binding site" evidence="2">
    <location>
        <position position="125"/>
    </location>
    <ligand>
        <name>Fe cation</name>
        <dbReference type="ChEBI" id="CHEBI:24875"/>
        <label>1</label>
    </ligand>
</feature>